<accession>P16251</accession>
<accession>Q9S2T6</accession>
<feature type="chain" id="PRO_0000205344" description="Uncharacterized protein SCO2049">
    <location>
        <begin position="1"/>
        <end position="134"/>
    </location>
</feature>
<feature type="sequence conflict" description="In Ref. 2; AAA26761." evidence="1" ref="2">
    <original>D</original>
    <variation>P</variation>
    <location>
        <position position="49"/>
    </location>
</feature>
<organism>
    <name type="scientific">Streptomyces coelicolor (strain ATCC BAA-471 / A3(2) / M145)</name>
    <dbReference type="NCBI Taxonomy" id="100226"/>
    <lineage>
        <taxon>Bacteria</taxon>
        <taxon>Bacillati</taxon>
        <taxon>Actinomycetota</taxon>
        <taxon>Actinomycetes</taxon>
        <taxon>Kitasatosporales</taxon>
        <taxon>Streptomycetaceae</taxon>
        <taxon>Streptomyces</taxon>
        <taxon>Streptomyces albidoflavus group</taxon>
    </lineage>
</organism>
<name>Y2049_STRCO</name>
<sequence length="134" mass="14382">MTSEAVRRVQSGSPWEESFGFARAVAAGDRVIVAGTTAFKGDMLYGEGDPYEQTKVAFGTAVEAIAEFGLGIESVIRTRVCLAHSRDVDAVGRAHKELFDSVRPVTTLLVVQGFIDSRVLVSVEVEAYRGAVDS</sequence>
<protein>
    <recommendedName>
        <fullName>Uncharacterized protein SCO2049</fullName>
    </recommendedName>
</protein>
<evidence type="ECO:0000305" key="1"/>
<keyword id="KW-1185">Reference proteome</keyword>
<dbReference type="EMBL" id="AL939111">
    <property type="protein sequence ID" value="CAB51441.1"/>
    <property type="molecule type" value="Genomic_DNA"/>
</dbReference>
<dbReference type="EMBL" id="M31628">
    <property type="protein sequence ID" value="AAA26761.1"/>
    <property type="molecule type" value="Genomic_DNA"/>
</dbReference>
<dbReference type="PIR" id="PQ0113">
    <property type="entry name" value="PQ0113"/>
</dbReference>
<dbReference type="PIR" id="T35078">
    <property type="entry name" value="T35078"/>
</dbReference>
<dbReference type="RefSeq" id="NP_626309.1">
    <property type="nucleotide sequence ID" value="NC_003888.3"/>
</dbReference>
<dbReference type="RefSeq" id="WP_003976767.1">
    <property type="nucleotide sequence ID" value="NZ_VNID01000001.1"/>
</dbReference>
<dbReference type="SMR" id="P16251"/>
<dbReference type="FunCoup" id="P16251">
    <property type="interactions" value="335"/>
</dbReference>
<dbReference type="STRING" id="100226.gene:17759647"/>
<dbReference type="PaxDb" id="100226-SCO2049"/>
<dbReference type="KEGG" id="sco:SCO2049"/>
<dbReference type="PATRIC" id="fig|100226.15.peg.2080"/>
<dbReference type="eggNOG" id="COG0251">
    <property type="taxonomic scope" value="Bacteria"/>
</dbReference>
<dbReference type="HOGENOM" id="CLU_100715_5_1_11"/>
<dbReference type="InParanoid" id="P16251"/>
<dbReference type="OrthoDB" id="9799840at2"/>
<dbReference type="PhylomeDB" id="P16251"/>
<dbReference type="Proteomes" id="UP000001973">
    <property type="component" value="Chromosome"/>
</dbReference>
<dbReference type="CDD" id="cd06154">
    <property type="entry name" value="YjgF_YER057c_UK114_like_6"/>
    <property type="match status" value="1"/>
</dbReference>
<dbReference type="Gene3D" id="3.30.1330.40">
    <property type="entry name" value="RutC-like"/>
    <property type="match status" value="1"/>
</dbReference>
<dbReference type="InterPro" id="IPR035959">
    <property type="entry name" value="RutC-like_sf"/>
</dbReference>
<dbReference type="InterPro" id="IPR006175">
    <property type="entry name" value="YjgF/YER057c/UK114"/>
</dbReference>
<dbReference type="PANTHER" id="PTHR43857">
    <property type="entry name" value="BLR7761 PROTEIN"/>
    <property type="match status" value="1"/>
</dbReference>
<dbReference type="PANTHER" id="PTHR43857:SF1">
    <property type="entry name" value="YJGH FAMILY PROTEIN"/>
    <property type="match status" value="1"/>
</dbReference>
<dbReference type="Pfam" id="PF01042">
    <property type="entry name" value="Ribonuc_L-PSP"/>
    <property type="match status" value="1"/>
</dbReference>
<dbReference type="SUPFAM" id="SSF55298">
    <property type="entry name" value="YjgF-like"/>
    <property type="match status" value="1"/>
</dbReference>
<reference key="1">
    <citation type="journal article" date="2002" name="Nature">
        <title>Complete genome sequence of the model actinomycete Streptomyces coelicolor A3(2).</title>
        <authorList>
            <person name="Bentley S.D."/>
            <person name="Chater K.F."/>
            <person name="Cerdeno-Tarraga A.-M."/>
            <person name="Challis G.L."/>
            <person name="Thomson N.R."/>
            <person name="James K.D."/>
            <person name="Harris D.E."/>
            <person name="Quail M.A."/>
            <person name="Kieser H."/>
            <person name="Harper D."/>
            <person name="Bateman A."/>
            <person name="Brown S."/>
            <person name="Chandra G."/>
            <person name="Chen C.W."/>
            <person name="Collins M."/>
            <person name="Cronin A."/>
            <person name="Fraser A."/>
            <person name="Goble A."/>
            <person name="Hidalgo J."/>
            <person name="Hornsby T."/>
            <person name="Howarth S."/>
            <person name="Huang C.-H."/>
            <person name="Kieser T."/>
            <person name="Larke L."/>
            <person name="Murphy L.D."/>
            <person name="Oliver K."/>
            <person name="O'Neil S."/>
            <person name="Rabbinowitsch E."/>
            <person name="Rajandream M.A."/>
            <person name="Rutherford K.M."/>
            <person name="Rutter S."/>
            <person name="Seeger K."/>
            <person name="Saunders D."/>
            <person name="Sharp S."/>
            <person name="Squares R."/>
            <person name="Squares S."/>
            <person name="Taylor K."/>
            <person name="Warren T."/>
            <person name="Wietzorrek A."/>
            <person name="Woodward J.R."/>
            <person name="Barrell B.G."/>
            <person name="Parkhill J."/>
            <person name="Hopwood D.A."/>
        </authorList>
    </citation>
    <scope>NUCLEOTIDE SEQUENCE [LARGE SCALE GENOMIC DNA]</scope>
    <source>
        <strain>ATCC BAA-471 / A3(2) / M145</strain>
    </source>
</reference>
<reference key="2">
    <citation type="journal article" date="1990" name="Gene">
        <title>Cloning and characterization of the histidine biosynthetic gene cluster of Streptomyces coelicolor A3(2).</title>
        <authorList>
            <person name="Limauro D."/>
            <person name="Avitabile A."/>
            <person name="Cappellano M."/>
            <person name="Puglia A.M."/>
            <person name="Bruni C.B."/>
        </authorList>
    </citation>
    <scope>NUCLEOTIDE SEQUENCE [GENOMIC DNA] OF 1-76</scope>
    <source>
        <strain>A3(2) / NRRL B-16638</strain>
    </source>
</reference>
<proteinExistence type="predicted"/>
<gene>
    <name type="ordered locus">SCO2049</name>
    <name type="ORF">SC4G6.18c</name>
</gene>